<gene>
    <name evidence="1" type="primary">ecfA1</name>
    <name type="synonym">cbiO1</name>
    <name type="ordered locus">MCAP_0668</name>
</gene>
<comment type="function">
    <text evidence="1">ATP-binding (A) component of a common energy-coupling factor (ECF) ABC-transporter complex. Unlike classic ABC transporters this ECF transporter provides the energy necessary to transport a number of different substrates.</text>
</comment>
<comment type="subunit">
    <text evidence="1">Forms a stable energy-coupling factor (ECF) transporter complex composed of 2 membrane-embedded substrate-binding proteins (S component), 2 ATP-binding proteins (A component) and 2 transmembrane proteins (T component).</text>
</comment>
<comment type="subcellular location">
    <subcellularLocation>
        <location evidence="1">Cell membrane</location>
        <topology evidence="1">Peripheral membrane protein</topology>
    </subcellularLocation>
</comment>
<comment type="similarity">
    <text evidence="1">Belongs to the ABC transporter superfamily. Energy-coupling factor EcfA family.</text>
</comment>
<protein>
    <recommendedName>
        <fullName evidence="1">Energy-coupling factor transporter ATP-binding protein EcfA1</fullName>
        <shortName evidence="1">ECF transporter A component EcfA1</shortName>
        <ecNumber evidence="1">7.-.-.-</ecNumber>
    </recommendedName>
</protein>
<organism>
    <name type="scientific">Mycoplasma capricolum subsp. capricolum (strain California kid / ATCC 27343 / NCTC 10154)</name>
    <dbReference type="NCBI Taxonomy" id="340047"/>
    <lineage>
        <taxon>Bacteria</taxon>
        <taxon>Bacillati</taxon>
        <taxon>Mycoplasmatota</taxon>
        <taxon>Mollicutes</taxon>
        <taxon>Mycoplasmataceae</taxon>
        <taxon>Mycoplasma</taxon>
    </lineage>
</organism>
<accession>Q2SRI1</accession>
<name>ECFA1_MYCCT</name>
<proteinExistence type="inferred from homology"/>
<sequence length="408" mass="46212">MDNLAIFEEFNSKKISQDDLEATIISLNNYFVKLNDLNNQYLNLIRQDNIDKSKKQNIKIQRKNTKIEINKIIATTKLFKQNIKLAESMYKKIKSSNNQDDIKKAQLEVDNAKSMLIQFKEAINGQGKSIKLKKLNDVAIEIKNLSFKYGPEFPNAIDDVSFTINQGEYVTIIGHNGSGKSTISKILIGVLNAQQGEIRIFGNIVHDHNIEQARKFLGIVFQNPDNQFIGSTVEADIAFGLENKRVDPKKMPDIILDSAKKVGMEWALKKEPLNLSGGQKQRVAIASTLALDPDIMIFDEATSMLDPKGKREIKEIMVQLRETRTKTILSITHDMDEILNADKVIVLDHGKLVRVAKPLDIVEDKEFLRNIQLDVPFVGLVREELEKKGIKIASTQNIDELVEQICKK</sequence>
<keyword id="KW-0067">ATP-binding</keyword>
<keyword id="KW-1003">Cell membrane</keyword>
<keyword id="KW-0472">Membrane</keyword>
<keyword id="KW-0547">Nucleotide-binding</keyword>
<keyword id="KW-1278">Translocase</keyword>
<keyword id="KW-0813">Transport</keyword>
<evidence type="ECO:0000255" key="1">
    <source>
        <dbReference type="HAMAP-Rule" id="MF_01710"/>
    </source>
</evidence>
<dbReference type="EC" id="7.-.-.-" evidence="1"/>
<dbReference type="EMBL" id="CP000123">
    <property type="protein sequence ID" value="ABC01207.1"/>
    <property type="molecule type" value="Genomic_DNA"/>
</dbReference>
<dbReference type="RefSeq" id="WP_011387527.1">
    <property type="nucleotide sequence ID" value="NC_007633.1"/>
</dbReference>
<dbReference type="SMR" id="Q2SRI1"/>
<dbReference type="GeneID" id="23778377"/>
<dbReference type="KEGG" id="mcp:MCAP_0668"/>
<dbReference type="HOGENOM" id="CLU_000604_18_0_14"/>
<dbReference type="PhylomeDB" id="Q2SRI1"/>
<dbReference type="Proteomes" id="UP000001928">
    <property type="component" value="Chromosome"/>
</dbReference>
<dbReference type="GO" id="GO:0043190">
    <property type="term" value="C:ATP-binding cassette (ABC) transporter complex"/>
    <property type="evidence" value="ECO:0007669"/>
    <property type="project" value="TreeGrafter"/>
</dbReference>
<dbReference type="GO" id="GO:0005524">
    <property type="term" value="F:ATP binding"/>
    <property type="evidence" value="ECO:0007669"/>
    <property type="project" value="UniProtKB-KW"/>
</dbReference>
<dbReference type="GO" id="GO:0016887">
    <property type="term" value="F:ATP hydrolysis activity"/>
    <property type="evidence" value="ECO:0007669"/>
    <property type="project" value="InterPro"/>
</dbReference>
<dbReference type="GO" id="GO:0042626">
    <property type="term" value="F:ATPase-coupled transmembrane transporter activity"/>
    <property type="evidence" value="ECO:0007669"/>
    <property type="project" value="TreeGrafter"/>
</dbReference>
<dbReference type="CDD" id="cd03225">
    <property type="entry name" value="ABC_cobalt_CbiO_domain1"/>
    <property type="match status" value="1"/>
</dbReference>
<dbReference type="FunFam" id="3.40.50.300:FF:000224">
    <property type="entry name" value="Energy-coupling factor transporter ATP-binding protein EcfA"/>
    <property type="match status" value="1"/>
</dbReference>
<dbReference type="Gene3D" id="3.40.50.300">
    <property type="entry name" value="P-loop containing nucleotide triphosphate hydrolases"/>
    <property type="match status" value="1"/>
</dbReference>
<dbReference type="InterPro" id="IPR003593">
    <property type="entry name" value="AAA+_ATPase"/>
</dbReference>
<dbReference type="InterPro" id="IPR003439">
    <property type="entry name" value="ABC_transporter-like_ATP-bd"/>
</dbReference>
<dbReference type="InterPro" id="IPR017871">
    <property type="entry name" value="ABC_transporter-like_CS"/>
</dbReference>
<dbReference type="InterPro" id="IPR015856">
    <property type="entry name" value="ABC_transpr_CbiO/EcfA_su"/>
</dbReference>
<dbReference type="InterPro" id="IPR050095">
    <property type="entry name" value="ECF_ABC_transporter_ATP-bd"/>
</dbReference>
<dbReference type="InterPro" id="IPR030947">
    <property type="entry name" value="EcfA_1"/>
</dbReference>
<dbReference type="InterPro" id="IPR027417">
    <property type="entry name" value="P-loop_NTPase"/>
</dbReference>
<dbReference type="NCBIfam" id="TIGR04520">
    <property type="entry name" value="ECF_ATPase_1"/>
    <property type="match status" value="1"/>
</dbReference>
<dbReference type="NCBIfam" id="NF010167">
    <property type="entry name" value="PRK13648.1"/>
    <property type="match status" value="1"/>
</dbReference>
<dbReference type="PANTHER" id="PTHR43553:SF24">
    <property type="entry name" value="ENERGY-COUPLING FACTOR TRANSPORTER ATP-BINDING PROTEIN ECFA1"/>
    <property type="match status" value="1"/>
</dbReference>
<dbReference type="PANTHER" id="PTHR43553">
    <property type="entry name" value="HEAVY METAL TRANSPORTER"/>
    <property type="match status" value="1"/>
</dbReference>
<dbReference type="Pfam" id="PF00005">
    <property type="entry name" value="ABC_tran"/>
    <property type="match status" value="1"/>
</dbReference>
<dbReference type="SMART" id="SM00382">
    <property type="entry name" value="AAA"/>
    <property type="match status" value="1"/>
</dbReference>
<dbReference type="SUPFAM" id="SSF52540">
    <property type="entry name" value="P-loop containing nucleoside triphosphate hydrolases"/>
    <property type="match status" value="1"/>
</dbReference>
<dbReference type="PROSITE" id="PS00211">
    <property type="entry name" value="ABC_TRANSPORTER_1"/>
    <property type="match status" value="1"/>
</dbReference>
<dbReference type="PROSITE" id="PS50893">
    <property type="entry name" value="ABC_TRANSPORTER_2"/>
    <property type="match status" value="1"/>
</dbReference>
<dbReference type="PROSITE" id="PS51246">
    <property type="entry name" value="CBIO"/>
    <property type="match status" value="1"/>
</dbReference>
<feature type="chain" id="PRO_0000287967" description="Energy-coupling factor transporter ATP-binding protein EcfA1">
    <location>
        <begin position="1"/>
        <end position="408"/>
    </location>
</feature>
<feature type="domain" description="ABC transporter" evidence="1">
    <location>
        <begin position="140"/>
        <end position="374"/>
    </location>
</feature>
<feature type="binding site" evidence="1">
    <location>
        <begin position="174"/>
        <end position="181"/>
    </location>
    <ligand>
        <name>ATP</name>
        <dbReference type="ChEBI" id="CHEBI:30616"/>
    </ligand>
</feature>
<reference key="1">
    <citation type="submission" date="2005-09" db="EMBL/GenBank/DDBJ databases">
        <authorList>
            <person name="Glass J.I."/>
            <person name="Lartigue C."/>
            <person name="Pfannkoch C."/>
            <person name="Baden-Tillson H."/>
            <person name="Smith H.O."/>
            <person name="Venter J.C."/>
            <person name="Roske K."/>
            <person name="Wise K.S."/>
            <person name="Calcutt M.J."/>
            <person name="Nelson W.C."/>
            <person name="Nierman W.C."/>
        </authorList>
    </citation>
    <scope>NUCLEOTIDE SEQUENCE [LARGE SCALE GENOMIC DNA]</scope>
    <source>
        <strain>California kid / ATCC 27343 / NCTC 10154</strain>
    </source>
</reference>